<protein>
    <recommendedName>
        <fullName evidence="1">Probable alpha-L-glutamate ligase</fullName>
        <ecNumber evidence="1">6.3.2.-</ecNumber>
    </recommendedName>
</protein>
<name>RIMK_SYNC1</name>
<feature type="chain" id="PRO_0000205468" description="Probable alpha-L-glutamate ligase">
    <location>
        <begin position="1"/>
        <end position="301"/>
    </location>
</feature>
<feature type="domain" description="ATP-grasp" evidence="1">
    <location>
        <begin position="104"/>
        <end position="287"/>
    </location>
</feature>
<feature type="binding site" evidence="1">
    <location>
        <position position="141"/>
    </location>
    <ligand>
        <name>ATP</name>
        <dbReference type="ChEBI" id="CHEBI:30616"/>
    </ligand>
</feature>
<feature type="binding site" evidence="1">
    <location>
        <begin position="178"/>
        <end position="179"/>
    </location>
    <ligand>
        <name>ATP</name>
        <dbReference type="ChEBI" id="CHEBI:30616"/>
    </ligand>
</feature>
<feature type="binding site" evidence="1">
    <location>
        <position position="187"/>
    </location>
    <ligand>
        <name>ATP</name>
        <dbReference type="ChEBI" id="CHEBI:30616"/>
    </ligand>
</feature>
<feature type="binding site" evidence="1">
    <location>
        <begin position="211"/>
        <end position="213"/>
    </location>
    <ligand>
        <name>ATP</name>
        <dbReference type="ChEBI" id="CHEBI:30616"/>
    </ligand>
</feature>
<feature type="binding site" evidence="1">
    <location>
        <position position="248"/>
    </location>
    <ligand>
        <name>Mg(2+)</name>
        <dbReference type="ChEBI" id="CHEBI:18420"/>
        <label>1</label>
    </ligand>
</feature>
<feature type="binding site" evidence="1">
    <location>
        <position position="248"/>
    </location>
    <ligand>
        <name>Mn(2+)</name>
        <dbReference type="ChEBI" id="CHEBI:29035"/>
        <label>1</label>
    </ligand>
</feature>
<feature type="binding site" evidence="1">
    <location>
        <position position="260"/>
    </location>
    <ligand>
        <name>Mg(2+)</name>
        <dbReference type="ChEBI" id="CHEBI:18420"/>
        <label>1</label>
    </ligand>
</feature>
<feature type="binding site" evidence="1">
    <location>
        <position position="260"/>
    </location>
    <ligand>
        <name>Mg(2+)</name>
        <dbReference type="ChEBI" id="CHEBI:18420"/>
        <label>2</label>
    </ligand>
</feature>
<feature type="binding site" evidence="1">
    <location>
        <position position="260"/>
    </location>
    <ligand>
        <name>Mn(2+)</name>
        <dbReference type="ChEBI" id="CHEBI:29035"/>
        <label>1</label>
    </ligand>
</feature>
<feature type="binding site" evidence="1">
    <location>
        <position position="260"/>
    </location>
    <ligand>
        <name>Mn(2+)</name>
        <dbReference type="ChEBI" id="CHEBI:29035"/>
        <label>2</label>
    </ligand>
</feature>
<feature type="binding site" evidence="1">
    <location>
        <position position="262"/>
    </location>
    <ligand>
        <name>Mg(2+)</name>
        <dbReference type="ChEBI" id="CHEBI:18420"/>
        <label>2</label>
    </ligand>
</feature>
<feature type="binding site" evidence="1">
    <location>
        <position position="262"/>
    </location>
    <ligand>
        <name>Mn(2+)</name>
        <dbReference type="ChEBI" id="CHEBI:29035"/>
        <label>2</label>
    </ligand>
</feature>
<proteinExistence type="inferred from homology"/>
<organism>
    <name type="scientific">Syntrophotalea carbinolica (strain DSM 2380 / NBRC 103641 / GraBd1)</name>
    <name type="common">Pelobacter carbinolicus</name>
    <dbReference type="NCBI Taxonomy" id="338963"/>
    <lineage>
        <taxon>Bacteria</taxon>
        <taxon>Pseudomonadati</taxon>
        <taxon>Thermodesulfobacteriota</taxon>
        <taxon>Desulfuromonadia</taxon>
        <taxon>Desulfuromonadales</taxon>
        <taxon>Syntrophotaleaceae</taxon>
        <taxon>Syntrophotalea</taxon>
    </lineage>
</organism>
<gene>
    <name evidence="1" type="primary">rimK</name>
    <name type="ordered locus">Pcar_2310</name>
</gene>
<reference key="1">
    <citation type="submission" date="2005-10" db="EMBL/GenBank/DDBJ databases">
        <title>Complete sequence of Pelobacter carbinolicus DSM 2380.</title>
        <authorList>
            <person name="Copeland A."/>
            <person name="Lucas S."/>
            <person name="Lapidus A."/>
            <person name="Barry K."/>
            <person name="Detter J.C."/>
            <person name="Glavina T."/>
            <person name="Hammon N."/>
            <person name="Israni S."/>
            <person name="Pitluck S."/>
            <person name="Chertkov O."/>
            <person name="Schmutz J."/>
            <person name="Larimer F."/>
            <person name="Land M."/>
            <person name="Kyrpides N."/>
            <person name="Ivanova N."/>
            <person name="Richardson P."/>
        </authorList>
    </citation>
    <scope>NUCLEOTIDE SEQUENCE [LARGE SCALE GENOMIC DNA]</scope>
    <source>
        <strain>DSM 2380 / NBRC 103641 / GraBd1</strain>
    </source>
</reference>
<keyword id="KW-0067">ATP-binding</keyword>
<keyword id="KW-0436">Ligase</keyword>
<keyword id="KW-0460">Magnesium</keyword>
<keyword id="KW-0464">Manganese</keyword>
<keyword id="KW-0479">Metal-binding</keyword>
<keyword id="KW-0547">Nucleotide-binding</keyword>
<keyword id="KW-0648">Protein biosynthesis</keyword>
<keyword id="KW-1185">Reference proteome</keyword>
<accession>Q3A258</accession>
<comment type="cofactor">
    <cofactor evidence="1">
        <name>Mg(2+)</name>
        <dbReference type="ChEBI" id="CHEBI:18420"/>
    </cofactor>
    <cofactor evidence="1">
        <name>Mn(2+)</name>
        <dbReference type="ChEBI" id="CHEBI:29035"/>
    </cofactor>
    <text evidence="1">Binds 2 magnesium or manganese ions per subunit.</text>
</comment>
<comment type="similarity">
    <text evidence="1">Belongs to the RimK family.</text>
</comment>
<dbReference type="EC" id="6.3.2.-" evidence="1"/>
<dbReference type="EMBL" id="CP000142">
    <property type="protein sequence ID" value="ABA89549.1"/>
    <property type="molecule type" value="Genomic_DNA"/>
</dbReference>
<dbReference type="RefSeq" id="WP_011342069.1">
    <property type="nucleotide sequence ID" value="NC_007498.2"/>
</dbReference>
<dbReference type="SMR" id="Q3A258"/>
<dbReference type="STRING" id="338963.Pcar_2310"/>
<dbReference type="KEGG" id="pca:Pcar_2310"/>
<dbReference type="eggNOG" id="COG0189">
    <property type="taxonomic scope" value="Bacteria"/>
</dbReference>
<dbReference type="HOGENOM" id="CLU_054353_0_1_7"/>
<dbReference type="OrthoDB" id="3865600at2"/>
<dbReference type="Proteomes" id="UP000002534">
    <property type="component" value="Chromosome"/>
</dbReference>
<dbReference type="GO" id="GO:0005737">
    <property type="term" value="C:cytoplasm"/>
    <property type="evidence" value="ECO:0007669"/>
    <property type="project" value="TreeGrafter"/>
</dbReference>
<dbReference type="GO" id="GO:0005524">
    <property type="term" value="F:ATP binding"/>
    <property type="evidence" value="ECO:0007669"/>
    <property type="project" value="UniProtKB-KW"/>
</dbReference>
<dbReference type="GO" id="GO:0046872">
    <property type="term" value="F:metal ion binding"/>
    <property type="evidence" value="ECO:0007669"/>
    <property type="project" value="UniProtKB-KW"/>
</dbReference>
<dbReference type="GO" id="GO:0018169">
    <property type="term" value="F:ribosomal S6-glutamic acid ligase activity"/>
    <property type="evidence" value="ECO:0007669"/>
    <property type="project" value="TreeGrafter"/>
</dbReference>
<dbReference type="GO" id="GO:0036211">
    <property type="term" value="P:protein modification process"/>
    <property type="evidence" value="ECO:0007669"/>
    <property type="project" value="InterPro"/>
</dbReference>
<dbReference type="GO" id="GO:0009432">
    <property type="term" value="P:SOS response"/>
    <property type="evidence" value="ECO:0007669"/>
    <property type="project" value="TreeGrafter"/>
</dbReference>
<dbReference type="GO" id="GO:0006412">
    <property type="term" value="P:translation"/>
    <property type="evidence" value="ECO:0007669"/>
    <property type="project" value="UniProtKB-KW"/>
</dbReference>
<dbReference type="FunFam" id="3.30.470.20:FF:000058">
    <property type="entry name" value="Alpha-aminoadipate--LysW ligase LysX protein"/>
    <property type="match status" value="1"/>
</dbReference>
<dbReference type="FunFam" id="3.40.50.20:FF:000004">
    <property type="entry name" value="Probable alpha-L-glutamate ligase"/>
    <property type="match status" value="1"/>
</dbReference>
<dbReference type="FunFam" id="3.30.1490.20:FF:000005">
    <property type="entry name" value="Probable alpha-L-glutamate ligase 1"/>
    <property type="match status" value="1"/>
</dbReference>
<dbReference type="Gene3D" id="3.40.50.20">
    <property type="match status" value="1"/>
</dbReference>
<dbReference type="Gene3D" id="3.30.1490.20">
    <property type="entry name" value="ATP-grasp fold, A domain"/>
    <property type="match status" value="1"/>
</dbReference>
<dbReference type="Gene3D" id="3.30.470.20">
    <property type="entry name" value="ATP-grasp fold, B domain"/>
    <property type="match status" value="1"/>
</dbReference>
<dbReference type="HAMAP" id="MF_01552">
    <property type="entry name" value="RimK"/>
    <property type="match status" value="1"/>
</dbReference>
<dbReference type="InterPro" id="IPR011761">
    <property type="entry name" value="ATP-grasp"/>
</dbReference>
<dbReference type="InterPro" id="IPR013651">
    <property type="entry name" value="ATP-grasp_RimK-type"/>
</dbReference>
<dbReference type="InterPro" id="IPR013815">
    <property type="entry name" value="ATP_grasp_subdomain_1"/>
</dbReference>
<dbReference type="InterPro" id="IPR023533">
    <property type="entry name" value="RimK"/>
</dbReference>
<dbReference type="InterPro" id="IPR041107">
    <property type="entry name" value="Rimk_N"/>
</dbReference>
<dbReference type="InterPro" id="IPR004666">
    <property type="entry name" value="Rp_bS6_RimK/Lys_biosynth_LsyX"/>
</dbReference>
<dbReference type="NCBIfam" id="NF007764">
    <property type="entry name" value="PRK10446.1"/>
    <property type="match status" value="1"/>
</dbReference>
<dbReference type="NCBIfam" id="TIGR00768">
    <property type="entry name" value="rimK_fam"/>
    <property type="match status" value="1"/>
</dbReference>
<dbReference type="PANTHER" id="PTHR21621:SF7">
    <property type="entry name" value="RIBOSOMAL PROTEIN BS6--L-GLUTAMATE LIGASE"/>
    <property type="match status" value="1"/>
</dbReference>
<dbReference type="PANTHER" id="PTHR21621">
    <property type="entry name" value="RIBOSOMAL PROTEIN S6 MODIFICATION PROTEIN"/>
    <property type="match status" value="1"/>
</dbReference>
<dbReference type="Pfam" id="PF08443">
    <property type="entry name" value="RimK"/>
    <property type="match status" value="1"/>
</dbReference>
<dbReference type="Pfam" id="PF18030">
    <property type="entry name" value="Rimk_N"/>
    <property type="match status" value="1"/>
</dbReference>
<dbReference type="SUPFAM" id="SSF56059">
    <property type="entry name" value="Glutathione synthetase ATP-binding domain-like"/>
    <property type="match status" value="1"/>
</dbReference>
<dbReference type="PROSITE" id="PS50975">
    <property type="entry name" value="ATP_GRASP"/>
    <property type="match status" value="1"/>
</dbReference>
<sequence>MKIGILSRNPELYSTRKLYEAAIIRGHQARIIDPLLCYMTIASQRPTIHYKGEELTGFDAIIPRIGASITFYGTAVVRQFEMMNIYSVNESVAISRSRDKLRSLQLLSRKGIGLPHTCFAHSTRYTKDLINQVGGAPLVVKLLEGTQGIGVVLAETQKAAESVIEAFKGLKEQILVQEFIEESGGADIRCLVVGGKVVAAMKRQGAEGEFRSNIHRGGKATVVRLTPEERATAVRSAHIMGLNVAGVDILQSNRGPIVMEVNSSPGLEGIETATGKDVADEIIRFIEKHTKPGRTKTRGKG</sequence>
<evidence type="ECO:0000255" key="1">
    <source>
        <dbReference type="HAMAP-Rule" id="MF_01552"/>
    </source>
</evidence>